<reference evidence="4" key="1">
    <citation type="journal article" date="2005" name="Biochim. Biophys. Acta">
        <title>Purification and characterization of a lectin from the white shrimp Litopenaeus setiferus (Crustacea decapoda) hemolymph.</title>
        <authorList>
            <person name="Alpuche J."/>
            <person name="Pereyra A."/>
            <person name="Agundis C."/>
            <person name="Rosas C."/>
            <person name="Pascual C."/>
            <person name="Slomianny M.-C."/>
            <person name="Vazquez L."/>
            <person name="Zenteno E."/>
        </authorList>
    </citation>
    <scope>PROTEIN SEQUENCE</scope>
    <scope>FUNCTION</scope>
    <scope>COFACTOR</scope>
    <scope>SUBUNIT</scope>
    <scope>SUBCELLULAR LOCATION</scope>
    <scope>TISSUE SPECIFICITY</scope>
    <source>
        <tissue evidence="2">Hemolymph</tissue>
    </source>
</reference>
<comment type="function">
    <text evidence="2">Sialic acid-specific lectin. Has hemagglutinating activity towards erythrocytes from several species, with high activity towards, rabbit, mouse and guinea pig erythrocytes, and low activity towards human erythrocytes. Hemagglutinating activity is blocked by treatment of erythrocytes with V.cholerae sialidase.</text>
</comment>
<comment type="cofactor">
    <cofactor evidence="2">
        <name>Ca(2+)</name>
        <dbReference type="ChEBI" id="CHEBI:29108"/>
    </cofactor>
    <cofactor evidence="2">
        <name>Mn(2+)</name>
        <dbReference type="ChEBI" id="CHEBI:29035"/>
    </cofactor>
    <cofactor evidence="2">
        <name>Mg(2+)</name>
        <dbReference type="ChEBI" id="CHEBI:18420"/>
    </cofactor>
    <text evidence="2">Binds Ca(2+). Mn(2+) or Mg(2+) can also be used to a lesser extent.</text>
</comment>
<comment type="subunit">
    <text evidence="2">Heterotetramer of two 80 kDa subunits and two 52 kDa subunits.</text>
</comment>
<comment type="subcellular location">
    <subcellularLocation>
        <location evidence="2">Secreted</location>
        <location evidence="2">Extracellular space</location>
    </subcellularLocation>
</comment>
<comment type="tissue specificity">
    <text evidence="2">Hemolymph.</text>
</comment>
<comment type="similarity">
    <text evidence="1">Belongs to the tyrosinase family. Hemocyanin subfamily.</text>
</comment>
<feature type="chain" id="PRO_0000233933" description="Lectin 80 kDa subunit" evidence="2">
    <location>
        <begin position="1"/>
        <end position="15" status="greater than"/>
    </location>
</feature>
<feature type="non-terminal residue" evidence="3">
    <location>
        <position position="15"/>
    </location>
</feature>
<accession>P84821</accession>
<evidence type="ECO:0000255" key="1"/>
<evidence type="ECO:0000269" key="2">
    <source>
    </source>
</evidence>
<evidence type="ECO:0000303" key="3">
    <source>
    </source>
</evidence>
<evidence type="ECO:0000305" key="4"/>
<sequence>DASNAQKQHDVNFLL</sequence>
<organism>
    <name type="scientific">Penaeus setiferus</name>
    <name type="common">Atlantic white shrimp</name>
    <name type="synonym">Litopenaeus setiferus</name>
    <dbReference type="NCBI Taxonomy" id="64468"/>
    <lineage>
        <taxon>Eukaryota</taxon>
        <taxon>Metazoa</taxon>
        <taxon>Ecdysozoa</taxon>
        <taxon>Arthropoda</taxon>
        <taxon>Crustacea</taxon>
        <taxon>Multicrustacea</taxon>
        <taxon>Malacostraca</taxon>
        <taxon>Eumalacostraca</taxon>
        <taxon>Eucarida</taxon>
        <taxon>Decapoda</taxon>
        <taxon>Dendrobranchiata</taxon>
        <taxon>Penaeoidea</taxon>
        <taxon>Penaeidae</taxon>
        <taxon>Penaeus</taxon>
    </lineage>
</organism>
<dbReference type="GO" id="GO:0005576">
    <property type="term" value="C:extracellular region"/>
    <property type="evidence" value="ECO:0000314"/>
    <property type="project" value="UniProtKB"/>
</dbReference>
<dbReference type="GO" id="GO:0048029">
    <property type="term" value="F:monosaccharide binding"/>
    <property type="evidence" value="ECO:0000314"/>
    <property type="project" value="UniProtKB"/>
</dbReference>
<dbReference type="GO" id="GO:0006959">
    <property type="term" value="P:humoral immune response"/>
    <property type="evidence" value="ECO:0000314"/>
    <property type="project" value="UniProtKB"/>
</dbReference>
<proteinExistence type="evidence at protein level"/>
<keyword id="KW-0903">Direct protein sequencing</keyword>
<keyword id="KW-0348">Hemagglutinin</keyword>
<keyword id="KW-0430">Lectin</keyword>
<keyword id="KW-0964">Secreted</keyword>
<protein>
    <recommendedName>
        <fullName>Lectin 80 kDa subunit</fullName>
    </recommendedName>
    <alternativeName>
        <fullName>LsL</fullName>
    </alternativeName>
</protein>
<name>LEC_PENST</name>